<accession>Q97QE4</accession>
<comment type="function">
    <text evidence="1">Large subunit of the glutamine-dependent carbamoyl phosphate synthetase (CPSase). CPSase catalyzes the formation of carbamoyl phosphate from the ammonia moiety of glutamine, carbonate, and phosphate donated by ATP, constituting the first step of 2 biosynthetic pathways, one leading to arginine and/or urea and the other to pyrimidine nucleotides. The large subunit (synthetase) binds the substrates ammonia (free or transferred from glutamine from the small subunit), hydrogencarbonate and ATP and carries out an ATP-coupled ligase reaction, activating hydrogencarbonate by forming carboxy phosphate which reacts with ammonia to form carbamoyl phosphate.</text>
</comment>
<comment type="catalytic activity">
    <reaction evidence="1">
        <text>hydrogencarbonate + L-glutamine + 2 ATP + H2O = carbamoyl phosphate + L-glutamate + 2 ADP + phosphate + 2 H(+)</text>
        <dbReference type="Rhea" id="RHEA:18633"/>
        <dbReference type="ChEBI" id="CHEBI:15377"/>
        <dbReference type="ChEBI" id="CHEBI:15378"/>
        <dbReference type="ChEBI" id="CHEBI:17544"/>
        <dbReference type="ChEBI" id="CHEBI:29985"/>
        <dbReference type="ChEBI" id="CHEBI:30616"/>
        <dbReference type="ChEBI" id="CHEBI:43474"/>
        <dbReference type="ChEBI" id="CHEBI:58228"/>
        <dbReference type="ChEBI" id="CHEBI:58359"/>
        <dbReference type="ChEBI" id="CHEBI:456216"/>
        <dbReference type="EC" id="6.3.5.5"/>
    </reaction>
</comment>
<comment type="catalytic activity">
    <molecule>Carbamoyl phosphate synthase large chain</molecule>
    <reaction evidence="1">
        <text>hydrogencarbonate + NH4(+) + 2 ATP = carbamoyl phosphate + 2 ADP + phosphate + 2 H(+)</text>
        <dbReference type="Rhea" id="RHEA:18029"/>
        <dbReference type="ChEBI" id="CHEBI:15378"/>
        <dbReference type="ChEBI" id="CHEBI:17544"/>
        <dbReference type="ChEBI" id="CHEBI:28938"/>
        <dbReference type="ChEBI" id="CHEBI:30616"/>
        <dbReference type="ChEBI" id="CHEBI:43474"/>
        <dbReference type="ChEBI" id="CHEBI:58228"/>
        <dbReference type="ChEBI" id="CHEBI:456216"/>
        <dbReference type="EC" id="6.3.4.16"/>
    </reaction>
</comment>
<comment type="cofactor">
    <cofactor evidence="1">
        <name>Mg(2+)</name>
        <dbReference type="ChEBI" id="CHEBI:18420"/>
    </cofactor>
    <cofactor evidence="1">
        <name>Mn(2+)</name>
        <dbReference type="ChEBI" id="CHEBI:29035"/>
    </cofactor>
    <text evidence="1">Binds 4 Mg(2+) or Mn(2+) ions per subunit.</text>
</comment>
<comment type="pathway">
    <text evidence="1">Amino-acid biosynthesis; L-arginine biosynthesis; carbamoyl phosphate from bicarbonate: step 1/1.</text>
</comment>
<comment type="pathway">
    <text evidence="1">Pyrimidine metabolism; UMP biosynthesis via de novo pathway; (S)-dihydroorotate from bicarbonate: step 1/3.</text>
</comment>
<comment type="subunit">
    <text evidence="1">Composed of two chains; the small (or glutamine) chain promotes the hydrolysis of glutamine to ammonia, which is used by the large (or ammonia) chain to synthesize carbamoyl phosphate. Tetramer of heterodimers (alpha,beta)4.</text>
</comment>
<comment type="domain">
    <text evidence="1">The large subunit is composed of 2 ATP-grasp domains that are involved in binding the 2 ATP molecules needed for carbamoyl phosphate synthesis. The N-terminal ATP-grasp domain (referred to as the carboxyphosphate synthetic component) catalyzes the ATP-dependent phosphorylation of hydrogencarbonate to carboxyphosphate and the subsequent nucleophilic attack by ammonia to form a carbamate intermediate. The C-terminal ATP-grasp domain (referred to as the carbamoyl phosphate synthetic component) then catalyzes the phosphorylation of carbamate with the second ATP to form the end product carbamoyl phosphate. The reactive and unstable enzyme intermediates are sequentially channeled from one active site to the next through the interior of the protein over a distance of at least 96 A.</text>
</comment>
<comment type="similarity">
    <text evidence="1">Belongs to the CarB family.</text>
</comment>
<dbReference type="EC" id="6.3.4.16" evidence="1"/>
<dbReference type="EC" id="6.3.5.5" evidence="1"/>
<dbReference type="EMBL" id="AE005672">
    <property type="protein sequence ID" value="AAK75379.1"/>
    <property type="molecule type" value="Genomic_DNA"/>
</dbReference>
<dbReference type="PIR" id="B95148">
    <property type="entry name" value="B95148"/>
</dbReference>
<dbReference type="RefSeq" id="WP_001126406.1">
    <property type="nucleotide sequence ID" value="NZ_CP155539.1"/>
</dbReference>
<dbReference type="SMR" id="Q97QE4"/>
<dbReference type="PaxDb" id="170187-SP_1275"/>
<dbReference type="EnsemblBacteria" id="AAK75379">
    <property type="protein sequence ID" value="AAK75379"/>
    <property type="gene ID" value="SP_1275"/>
</dbReference>
<dbReference type="KEGG" id="spn:SP_1275"/>
<dbReference type="eggNOG" id="COG0458">
    <property type="taxonomic scope" value="Bacteria"/>
</dbReference>
<dbReference type="PhylomeDB" id="Q97QE4"/>
<dbReference type="BioCyc" id="SPNE170187:G1FZB-1288-MONOMER"/>
<dbReference type="UniPathway" id="UPA00068">
    <property type="reaction ID" value="UER00171"/>
</dbReference>
<dbReference type="UniPathway" id="UPA00070">
    <property type="reaction ID" value="UER00115"/>
</dbReference>
<dbReference type="Proteomes" id="UP000000585">
    <property type="component" value="Chromosome"/>
</dbReference>
<dbReference type="GO" id="GO:0005737">
    <property type="term" value="C:cytoplasm"/>
    <property type="evidence" value="ECO:0007669"/>
    <property type="project" value="TreeGrafter"/>
</dbReference>
<dbReference type="GO" id="GO:0005524">
    <property type="term" value="F:ATP binding"/>
    <property type="evidence" value="ECO:0007669"/>
    <property type="project" value="UniProtKB-UniRule"/>
</dbReference>
<dbReference type="GO" id="GO:0004087">
    <property type="term" value="F:carbamoyl-phosphate synthase (ammonia) activity"/>
    <property type="evidence" value="ECO:0007669"/>
    <property type="project" value="RHEA"/>
</dbReference>
<dbReference type="GO" id="GO:0004088">
    <property type="term" value="F:carbamoyl-phosphate synthase (glutamine-hydrolyzing) activity"/>
    <property type="evidence" value="ECO:0007669"/>
    <property type="project" value="UniProtKB-UniRule"/>
</dbReference>
<dbReference type="GO" id="GO:0046872">
    <property type="term" value="F:metal ion binding"/>
    <property type="evidence" value="ECO:0007669"/>
    <property type="project" value="UniProtKB-KW"/>
</dbReference>
<dbReference type="GO" id="GO:0044205">
    <property type="term" value="P:'de novo' UMP biosynthetic process"/>
    <property type="evidence" value="ECO:0007669"/>
    <property type="project" value="UniProtKB-UniRule"/>
</dbReference>
<dbReference type="GO" id="GO:0006541">
    <property type="term" value="P:glutamine metabolic process"/>
    <property type="evidence" value="ECO:0007669"/>
    <property type="project" value="TreeGrafter"/>
</dbReference>
<dbReference type="GO" id="GO:0006526">
    <property type="term" value="P:L-arginine biosynthetic process"/>
    <property type="evidence" value="ECO:0007669"/>
    <property type="project" value="UniProtKB-UniRule"/>
</dbReference>
<dbReference type="CDD" id="cd01424">
    <property type="entry name" value="MGS_CPS_II"/>
    <property type="match status" value="1"/>
</dbReference>
<dbReference type="FunFam" id="1.10.1030.10:FF:000002">
    <property type="entry name" value="Carbamoyl-phosphate synthase large chain"/>
    <property type="match status" value="1"/>
</dbReference>
<dbReference type="FunFam" id="3.30.1490.20:FF:000001">
    <property type="entry name" value="Carbamoyl-phosphate synthase large chain"/>
    <property type="match status" value="1"/>
</dbReference>
<dbReference type="FunFam" id="3.30.470.20:FF:000001">
    <property type="entry name" value="Carbamoyl-phosphate synthase large chain"/>
    <property type="match status" value="1"/>
</dbReference>
<dbReference type="FunFam" id="3.30.470.20:FF:000026">
    <property type="entry name" value="Carbamoyl-phosphate synthase large chain"/>
    <property type="match status" value="1"/>
</dbReference>
<dbReference type="FunFam" id="3.40.50.1380:FF:000017">
    <property type="entry name" value="Carbamoyl-phosphate synthase large chain"/>
    <property type="match status" value="1"/>
</dbReference>
<dbReference type="FunFam" id="3.40.50.20:FF:000001">
    <property type="entry name" value="Carbamoyl-phosphate synthase large chain"/>
    <property type="match status" value="2"/>
</dbReference>
<dbReference type="Gene3D" id="3.40.50.20">
    <property type="match status" value="2"/>
</dbReference>
<dbReference type="Gene3D" id="3.30.1490.20">
    <property type="entry name" value="ATP-grasp fold, A domain"/>
    <property type="match status" value="1"/>
</dbReference>
<dbReference type="Gene3D" id="3.30.470.20">
    <property type="entry name" value="ATP-grasp fold, B domain"/>
    <property type="match status" value="2"/>
</dbReference>
<dbReference type="Gene3D" id="1.10.1030.10">
    <property type="entry name" value="Carbamoyl-phosphate synthetase, large subunit oligomerisation domain"/>
    <property type="match status" value="1"/>
</dbReference>
<dbReference type="Gene3D" id="3.40.50.1380">
    <property type="entry name" value="Methylglyoxal synthase-like domain"/>
    <property type="match status" value="1"/>
</dbReference>
<dbReference type="HAMAP" id="MF_01210_B">
    <property type="entry name" value="CPSase_L_chain_B"/>
    <property type="match status" value="1"/>
</dbReference>
<dbReference type="InterPro" id="IPR011761">
    <property type="entry name" value="ATP-grasp"/>
</dbReference>
<dbReference type="InterPro" id="IPR013815">
    <property type="entry name" value="ATP_grasp_subdomain_1"/>
</dbReference>
<dbReference type="InterPro" id="IPR006275">
    <property type="entry name" value="CarbamoylP_synth_lsu"/>
</dbReference>
<dbReference type="InterPro" id="IPR005480">
    <property type="entry name" value="CarbamoylP_synth_lsu_oligo"/>
</dbReference>
<dbReference type="InterPro" id="IPR036897">
    <property type="entry name" value="CarbamoylP_synth_lsu_oligo_sf"/>
</dbReference>
<dbReference type="InterPro" id="IPR005479">
    <property type="entry name" value="CbamoylP_synth_lsu-like_ATP-bd"/>
</dbReference>
<dbReference type="InterPro" id="IPR005483">
    <property type="entry name" value="CbamoylP_synth_lsu_CPSase_dom"/>
</dbReference>
<dbReference type="InterPro" id="IPR011607">
    <property type="entry name" value="MGS-like_dom"/>
</dbReference>
<dbReference type="InterPro" id="IPR036914">
    <property type="entry name" value="MGS-like_dom_sf"/>
</dbReference>
<dbReference type="InterPro" id="IPR033937">
    <property type="entry name" value="MGS_CPS_CarB"/>
</dbReference>
<dbReference type="InterPro" id="IPR016185">
    <property type="entry name" value="PreATP-grasp_dom_sf"/>
</dbReference>
<dbReference type="NCBIfam" id="TIGR01369">
    <property type="entry name" value="CPSaseII_lrg"/>
    <property type="match status" value="1"/>
</dbReference>
<dbReference type="NCBIfam" id="NF003671">
    <property type="entry name" value="PRK05294.1"/>
    <property type="match status" value="1"/>
</dbReference>
<dbReference type="NCBIfam" id="NF009455">
    <property type="entry name" value="PRK12815.1"/>
    <property type="match status" value="1"/>
</dbReference>
<dbReference type="PANTHER" id="PTHR11405:SF53">
    <property type="entry name" value="CARBAMOYL-PHOSPHATE SYNTHASE [AMMONIA], MITOCHONDRIAL"/>
    <property type="match status" value="1"/>
</dbReference>
<dbReference type="PANTHER" id="PTHR11405">
    <property type="entry name" value="CARBAMOYLTRANSFERASE FAMILY MEMBER"/>
    <property type="match status" value="1"/>
</dbReference>
<dbReference type="Pfam" id="PF02786">
    <property type="entry name" value="CPSase_L_D2"/>
    <property type="match status" value="2"/>
</dbReference>
<dbReference type="Pfam" id="PF02787">
    <property type="entry name" value="CPSase_L_D3"/>
    <property type="match status" value="1"/>
</dbReference>
<dbReference type="Pfam" id="PF02142">
    <property type="entry name" value="MGS"/>
    <property type="match status" value="1"/>
</dbReference>
<dbReference type="PRINTS" id="PR00098">
    <property type="entry name" value="CPSASE"/>
</dbReference>
<dbReference type="SMART" id="SM01096">
    <property type="entry name" value="CPSase_L_D3"/>
    <property type="match status" value="1"/>
</dbReference>
<dbReference type="SMART" id="SM01209">
    <property type="entry name" value="GARS_A"/>
    <property type="match status" value="1"/>
</dbReference>
<dbReference type="SMART" id="SM00851">
    <property type="entry name" value="MGS"/>
    <property type="match status" value="1"/>
</dbReference>
<dbReference type="SUPFAM" id="SSF48108">
    <property type="entry name" value="Carbamoyl phosphate synthetase, large subunit connection domain"/>
    <property type="match status" value="1"/>
</dbReference>
<dbReference type="SUPFAM" id="SSF56059">
    <property type="entry name" value="Glutathione synthetase ATP-binding domain-like"/>
    <property type="match status" value="2"/>
</dbReference>
<dbReference type="SUPFAM" id="SSF52335">
    <property type="entry name" value="Methylglyoxal synthase-like"/>
    <property type="match status" value="1"/>
</dbReference>
<dbReference type="SUPFAM" id="SSF52440">
    <property type="entry name" value="PreATP-grasp domain"/>
    <property type="match status" value="2"/>
</dbReference>
<dbReference type="PROSITE" id="PS50975">
    <property type="entry name" value="ATP_GRASP"/>
    <property type="match status" value="2"/>
</dbReference>
<dbReference type="PROSITE" id="PS00866">
    <property type="entry name" value="CPSASE_1"/>
    <property type="match status" value="2"/>
</dbReference>
<dbReference type="PROSITE" id="PS00867">
    <property type="entry name" value="CPSASE_2"/>
    <property type="match status" value="2"/>
</dbReference>
<dbReference type="PROSITE" id="PS51855">
    <property type="entry name" value="MGS"/>
    <property type="match status" value="1"/>
</dbReference>
<evidence type="ECO:0000255" key="1">
    <source>
        <dbReference type="HAMAP-Rule" id="MF_01210"/>
    </source>
</evidence>
<keyword id="KW-0028">Amino-acid biosynthesis</keyword>
<keyword id="KW-0055">Arginine biosynthesis</keyword>
<keyword id="KW-0067">ATP-binding</keyword>
<keyword id="KW-0436">Ligase</keyword>
<keyword id="KW-0460">Magnesium</keyword>
<keyword id="KW-0464">Manganese</keyword>
<keyword id="KW-0479">Metal-binding</keyword>
<keyword id="KW-0547">Nucleotide-binding</keyword>
<keyword id="KW-0665">Pyrimidine biosynthesis</keyword>
<keyword id="KW-1185">Reference proteome</keyword>
<keyword id="KW-0677">Repeat</keyword>
<feature type="chain" id="PRO_0000145051" description="Carbamoyl phosphate synthase large chain">
    <location>
        <begin position="1"/>
        <end position="1058"/>
    </location>
</feature>
<feature type="domain" description="ATP-grasp 1" evidence="1">
    <location>
        <begin position="133"/>
        <end position="327"/>
    </location>
</feature>
<feature type="domain" description="ATP-grasp 2" evidence="1">
    <location>
        <begin position="671"/>
        <end position="861"/>
    </location>
</feature>
<feature type="domain" description="MGS-like" evidence="1">
    <location>
        <begin position="930"/>
        <end position="1058"/>
    </location>
</feature>
<feature type="region of interest" description="Carboxyphosphate synthetic domain" evidence="1">
    <location>
        <begin position="1"/>
        <end position="401"/>
    </location>
</feature>
<feature type="region of interest" description="Oligomerization domain" evidence="1">
    <location>
        <begin position="402"/>
        <end position="546"/>
    </location>
</feature>
<feature type="region of interest" description="Carbamoyl phosphate synthetic domain" evidence="1">
    <location>
        <begin position="547"/>
        <end position="929"/>
    </location>
</feature>
<feature type="region of interest" description="Allosteric domain" evidence="1">
    <location>
        <begin position="930"/>
        <end position="1058"/>
    </location>
</feature>
<feature type="binding site" evidence="1">
    <location>
        <position position="129"/>
    </location>
    <ligand>
        <name>ATP</name>
        <dbReference type="ChEBI" id="CHEBI:30616"/>
        <label>1</label>
    </ligand>
</feature>
<feature type="binding site" evidence="1">
    <location>
        <position position="169"/>
    </location>
    <ligand>
        <name>ATP</name>
        <dbReference type="ChEBI" id="CHEBI:30616"/>
        <label>1</label>
    </ligand>
</feature>
<feature type="binding site" evidence="1">
    <location>
        <position position="175"/>
    </location>
    <ligand>
        <name>ATP</name>
        <dbReference type="ChEBI" id="CHEBI:30616"/>
        <label>1</label>
    </ligand>
</feature>
<feature type="binding site" evidence="1">
    <location>
        <position position="176"/>
    </location>
    <ligand>
        <name>ATP</name>
        <dbReference type="ChEBI" id="CHEBI:30616"/>
        <label>1</label>
    </ligand>
</feature>
<feature type="binding site" evidence="1">
    <location>
        <position position="208"/>
    </location>
    <ligand>
        <name>ATP</name>
        <dbReference type="ChEBI" id="CHEBI:30616"/>
        <label>1</label>
    </ligand>
</feature>
<feature type="binding site" evidence="1">
    <location>
        <position position="210"/>
    </location>
    <ligand>
        <name>ATP</name>
        <dbReference type="ChEBI" id="CHEBI:30616"/>
        <label>1</label>
    </ligand>
</feature>
<feature type="binding site" evidence="1">
    <location>
        <position position="215"/>
    </location>
    <ligand>
        <name>ATP</name>
        <dbReference type="ChEBI" id="CHEBI:30616"/>
        <label>1</label>
    </ligand>
</feature>
<feature type="binding site" evidence="1">
    <location>
        <position position="241"/>
    </location>
    <ligand>
        <name>ATP</name>
        <dbReference type="ChEBI" id="CHEBI:30616"/>
        <label>1</label>
    </ligand>
</feature>
<feature type="binding site" evidence="1">
    <location>
        <position position="242"/>
    </location>
    <ligand>
        <name>ATP</name>
        <dbReference type="ChEBI" id="CHEBI:30616"/>
        <label>1</label>
    </ligand>
</feature>
<feature type="binding site" evidence="1">
    <location>
        <position position="243"/>
    </location>
    <ligand>
        <name>ATP</name>
        <dbReference type="ChEBI" id="CHEBI:30616"/>
        <label>1</label>
    </ligand>
</feature>
<feature type="binding site" evidence="1">
    <location>
        <position position="284"/>
    </location>
    <ligand>
        <name>ATP</name>
        <dbReference type="ChEBI" id="CHEBI:30616"/>
        <label>1</label>
    </ligand>
</feature>
<feature type="binding site" evidence="1">
    <location>
        <position position="284"/>
    </location>
    <ligand>
        <name>Mg(2+)</name>
        <dbReference type="ChEBI" id="CHEBI:18420"/>
        <label>1</label>
    </ligand>
</feature>
<feature type="binding site" evidence="1">
    <location>
        <position position="284"/>
    </location>
    <ligand>
        <name>Mn(2+)</name>
        <dbReference type="ChEBI" id="CHEBI:29035"/>
        <label>1</label>
    </ligand>
</feature>
<feature type="binding site" evidence="1">
    <location>
        <position position="298"/>
    </location>
    <ligand>
        <name>ATP</name>
        <dbReference type="ChEBI" id="CHEBI:30616"/>
        <label>1</label>
    </ligand>
</feature>
<feature type="binding site" evidence="1">
    <location>
        <position position="298"/>
    </location>
    <ligand>
        <name>Mg(2+)</name>
        <dbReference type="ChEBI" id="CHEBI:18420"/>
        <label>1</label>
    </ligand>
</feature>
<feature type="binding site" evidence="1">
    <location>
        <position position="298"/>
    </location>
    <ligand>
        <name>Mg(2+)</name>
        <dbReference type="ChEBI" id="CHEBI:18420"/>
        <label>2</label>
    </ligand>
</feature>
<feature type="binding site" evidence="1">
    <location>
        <position position="298"/>
    </location>
    <ligand>
        <name>Mn(2+)</name>
        <dbReference type="ChEBI" id="CHEBI:29035"/>
        <label>1</label>
    </ligand>
</feature>
<feature type="binding site" evidence="1">
    <location>
        <position position="298"/>
    </location>
    <ligand>
        <name>Mn(2+)</name>
        <dbReference type="ChEBI" id="CHEBI:29035"/>
        <label>2</label>
    </ligand>
</feature>
<feature type="binding site" evidence="1">
    <location>
        <position position="300"/>
    </location>
    <ligand>
        <name>Mg(2+)</name>
        <dbReference type="ChEBI" id="CHEBI:18420"/>
        <label>2</label>
    </ligand>
</feature>
<feature type="binding site" evidence="1">
    <location>
        <position position="300"/>
    </location>
    <ligand>
        <name>Mn(2+)</name>
        <dbReference type="ChEBI" id="CHEBI:29035"/>
        <label>2</label>
    </ligand>
</feature>
<feature type="binding site" evidence="1">
    <location>
        <position position="707"/>
    </location>
    <ligand>
        <name>ATP</name>
        <dbReference type="ChEBI" id="CHEBI:30616"/>
        <label>2</label>
    </ligand>
</feature>
<feature type="binding site" evidence="1">
    <location>
        <position position="746"/>
    </location>
    <ligand>
        <name>ATP</name>
        <dbReference type="ChEBI" id="CHEBI:30616"/>
        <label>2</label>
    </ligand>
</feature>
<feature type="binding site" evidence="1">
    <location>
        <position position="748"/>
    </location>
    <ligand>
        <name>ATP</name>
        <dbReference type="ChEBI" id="CHEBI:30616"/>
        <label>2</label>
    </ligand>
</feature>
<feature type="binding site" evidence="1">
    <location>
        <position position="752"/>
    </location>
    <ligand>
        <name>ATP</name>
        <dbReference type="ChEBI" id="CHEBI:30616"/>
        <label>2</label>
    </ligand>
</feature>
<feature type="binding site" evidence="1">
    <location>
        <position position="777"/>
    </location>
    <ligand>
        <name>ATP</name>
        <dbReference type="ChEBI" id="CHEBI:30616"/>
        <label>2</label>
    </ligand>
</feature>
<feature type="binding site" evidence="1">
    <location>
        <position position="778"/>
    </location>
    <ligand>
        <name>ATP</name>
        <dbReference type="ChEBI" id="CHEBI:30616"/>
        <label>2</label>
    </ligand>
</feature>
<feature type="binding site" evidence="1">
    <location>
        <position position="779"/>
    </location>
    <ligand>
        <name>ATP</name>
        <dbReference type="ChEBI" id="CHEBI:30616"/>
        <label>2</label>
    </ligand>
</feature>
<feature type="binding site" evidence="1">
    <location>
        <position position="780"/>
    </location>
    <ligand>
        <name>ATP</name>
        <dbReference type="ChEBI" id="CHEBI:30616"/>
        <label>2</label>
    </ligand>
</feature>
<feature type="binding site" evidence="1">
    <location>
        <position position="820"/>
    </location>
    <ligand>
        <name>ATP</name>
        <dbReference type="ChEBI" id="CHEBI:30616"/>
        <label>2</label>
    </ligand>
</feature>
<feature type="binding site" evidence="1">
    <location>
        <position position="820"/>
    </location>
    <ligand>
        <name>Mg(2+)</name>
        <dbReference type="ChEBI" id="CHEBI:18420"/>
        <label>3</label>
    </ligand>
</feature>
<feature type="binding site" evidence="1">
    <location>
        <position position="820"/>
    </location>
    <ligand>
        <name>Mn(2+)</name>
        <dbReference type="ChEBI" id="CHEBI:29035"/>
        <label>3</label>
    </ligand>
</feature>
<feature type="binding site" evidence="1">
    <location>
        <position position="832"/>
    </location>
    <ligand>
        <name>ATP</name>
        <dbReference type="ChEBI" id="CHEBI:30616"/>
        <label>2</label>
    </ligand>
</feature>
<feature type="binding site" evidence="1">
    <location>
        <position position="832"/>
    </location>
    <ligand>
        <name>Mg(2+)</name>
        <dbReference type="ChEBI" id="CHEBI:18420"/>
        <label>3</label>
    </ligand>
</feature>
<feature type="binding site" evidence="1">
    <location>
        <position position="832"/>
    </location>
    <ligand>
        <name>Mg(2+)</name>
        <dbReference type="ChEBI" id="CHEBI:18420"/>
        <label>4</label>
    </ligand>
</feature>
<feature type="binding site" evidence="1">
    <location>
        <position position="832"/>
    </location>
    <ligand>
        <name>Mn(2+)</name>
        <dbReference type="ChEBI" id="CHEBI:29035"/>
        <label>3</label>
    </ligand>
</feature>
<feature type="binding site" evidence="1">
    <location>
        <position position="832"/>
    </location>
    <ligand>
        <name>Mn(2+)</name>
        <dbReference type="ChEBI" id="CHEBI:29035"/>
        <label>4</label>
    </ligand>
</feature>
<feature type="binding site" evidence="1">
    <location>
        <position position="834"/>
    </location>
    <ligand>
        <name>Mg(2+)</name>
        <dbReference type="ChEBI" id="CHEBI:18420"/>
        <label>4</label>
    </ligand>
</feature>
<feature type="binding site" evidence="1">
    <location>
        <position position="834"/>
    </location>
    <ligand>
        <name>Mn(2+)</name>
        <dbReference type="ChEBI" id="CHEBI:29035"/>
        <label>4</label>
    </ligand>
</feature>
<sequence length="1058" mass="116059">MPKRTDIQKIMVIGSGPIIIGQAAEFDYAGTQACLSLKEEGYEVVLVNSNPATIMTDKEIADKVYIEPITLEFVTRILRKEGPDALLPTLGGQTGLNMAMELSKNGILDELGVELLGTKLSAIDQAEDRDLFKQLMEELEQPIPESEIVNTVEEAVAFAATIGYPVIVRPAFTLGGTGGGMCANEKELREITENGLKLSPVTQCLIERSIAGFKEIEYEVMRDSADNALVVCNMENFDPVGIHTGDSIVFAPAQTMSDYENQMLRDASLSIIRALKIEGGCNVQLALDPNSFKYYVIEVNPRVSRSSALASKATGYPIAKLAAKIAVGLTLDEVINPVTGSTYAMFEPALDYVVAKIPRFPFDKFEKGERRLGTQMKATGEVMAIGRNIEESLLKACRSLEIGVHHNEIPELAAVSDDALIEKVVKAQDDRLFYVSEAIRRGYTPEEIAELTKIDIFYLDKLLHIFEIEQELGAHPQDLEVLKTAKLNGFSDRKIAELWGTTDDKVRQLRLENKIVPVYKMVDTCAAEFDSETPYFYSTYGWENESIRSDKESVLVLGSGPIRIGQGVEFDYATVHSVKAIQAAGYEAIIMNSNPETVSTDFSVSDKLYFEPLTFEDVMNVIDLEQPKGVIVQFGGQTAINLAEPLAKAGVTILGTQVADLDRAEDRDLFEQALKELDIPQPPGQTATNEEEAALAARKIGFPVLVRPSYVLGGRAMEIVENEEDLRSYMRTAVKASPDHPVLVDSYIVGQECEVDAISDGKNVLIPGIMEHIERAGVHSGDSMAVYPPQTLSQKVQETIADYTKRLAIGLHCLGMMNIQFVIKDEKVYVIEVNPRASRTVPFLSKVTNIPMAQVATKLILGQSLSELGYQNGLYPESTRVHIKAPVFSFTKLAKVDSLLGPEMKSTGEVMGSDATLEKALYKAFEASYLHLPTFGNVVFTIADDAKEEALNLARRFQNIGYGILATEGTAAFFASHGLQAQPVGKIGDDDKDIPSFVRKGRIQAIINTVGTKRTADEDGEQIRRSAIEHGVPLFTALDTANAMLKVLESRSFVTEAI</sequence>
<gene>
    <name evidence="1" type="primary">carB</name>
    <name type="ordered locus">SP_1275</name>
</gene>
<name>CARB_STRPN</name>
<reference key="1">
    <citation type="journal article" date="2001" name="Science">
        <title>Complete genome sequence of a virulent isolate of Streptococcus pneumoniae.</title>
        <authorList>
            <person name="Tettelin H."/>
            <person name="Nelson K.E."/>
            <person name="Paulsen I.T."/>
            <person name="Eisen J.A."/>
            <person name="Read T.D."/>
            <person name="Peterson S.N."/>
            <person name="Heidelberg J.F."/>
            <person name="DeBoy R.T."/>
            <person name="Haft D.H."/>
            <person name="Dodson R.J."/>
            <person name="Durkin A.S."/>
            <person name="Gwinn M.L."/>
            <person name="Kolonay J.F."/>
            <person name="Nelson W.C."/>
            <person name="Peterson J.D."/>
            <person name="Umayam L.A."/>
            <person name="White O."/>
            <person name="Salzberg S.L."/>
            <person name="Lewis M.R."/>
            <person name="Radune D."/>
            <person name="Holtzapple E.K."/>
            <person name="Khouri H.M."/>
            <person name="Wolf A.M."/>
            <person name="Utterback T.R."/>
            <person name="Hansen C.L."/>
            <person name="McDonald L.A."/>
            <person name="Feldblyum T.V."/>
            <person name="Angiuoli S.V."/>
            <person name="Dickinson T."/>
            <person name="Hickey E.K."/>
            <person name="Holt I.E."/>
            <person name="Loftus B.J."/>
            <person name="Yang F."/>
            <person name="Smith H.O."/>
            <person name="Venter J.C."/>
            <person name="Dougherty B.A."/>
            <person name="Morrison D.A."/>
            <person name="Hollingshead S.K."/>
            <person name="Fraser C.M."/>
        </authorList>
    </citation>
    <scope>NUCLEOTIDE SEQUENCE [LARGE SCALE GENOMIC DNA]</scope>
    <source>
        <strain>ATCC BAA-334 / TIGR4</strain>
    </source>
</reference>
<organism>
    <name type="scientific">Streptococcus pneumoniae serotype 4 (strain ATCC BAA-334 / TIGR4)</name>
    <dbReference type="NCBI Taxonomy" id="170187"/>
    <lineage>
        <taxon>Bacteria</taxon>
        <taxon>Bacillati</taxon>
        <taxon>Bacillota</taxon>
        <taxon>Bacilli</taxon>
        <taxon>Lactobacillales</taxon>
        <taxon>Streptococcaceae</taxon>
        <taxon>Streptococcus</taxon>
    </lineage>
</organism>
<proteinExistence type="inferred from homology"/>
<protein>
    <recommendedName>
        <fullName evidence="1">Carbamoyl phosphate synthase large chain</fullName>
        <ecNumber evidence="1">6.3.4.16</ecNumber>
        <ecNumber evidence="1">6.3.5.5</ecNumber>
    </recommendedName>
    <alternativeName>
        <fullName evidence="1">Carbamoyl phosphate synthetase ammonia chain</fullName>
    </alternativeName>
</protein>